<name>MATK_TRIRP</name>
<feature type="chain" id="PRO_0000143751" description="Maturase K">
    <location>
        <begin position="1"/>
        <end position="506"/>
    </location>
</feature>
<reference key="1">
    <citation type="book" date="2003" name="Advances in legume systematics - part 10">
        <title>Phylogenetic analyses of tribes Trifolieae and Vicieae based on sequences of the plastid gene matK (Papilionoideae: Leguminosae).</title>
        <editorList>
            <person name="Klitgaard B.B."/>
            <person name="Bruneau A."/>
        </editorList>
        <authorList>
            <person name="Steele K.P."/>
            <person name="Wojciechowski M.F."/>
        </authorList>
    </citation>
    <scope>NUCLEOTIDE SEQUENCE [GENOMIC DNA]</scope>
</reference>
<organism>
    <name type="scientific">Trifolium repens</name>
    <name type="common">Creeping white clover</name>
    <dbReference type="NCBI Taxonomy" id="3899"/>
    <lineage>
        <taxon>Eukaryota</taxon>
        <taxon>Viridiplantae</taxon>
        <taxon>Streptophyta</taxon>
        <taxon>Embryophyta</taxon>
        <taxon>Tracheophyta</taxon>
        <taxon>Spermatophyta</taxon>
        <taxon>Magnoliopsida</taxon>
        <taxon>eudicotyledons</taxon>
        <taxon>Gunneridae</taxon>
        <taxon>Pentapetalae</taxon>
        <taxon>rosids</taxon>
        <taxon>fabids</taxon>
        <taxon>Fabales</taxon>
        <taxon>Fabaceae</taxon>
        <taxon>Papilionoideae</taxon>
        <taxon>50 kb inversion clade</taxon>
        <taxon>NPAAA clade</taxon>
        <taxon>Hologalegina</taxon>
        <taxon>IRL clade</taxon>
        <taxon>Trifolieae</taxon>
        <taxon>Trifolium</taxon>
    </lineage>
</organism>
<protein>
    <recommendedName>
        <fullName evidence="1">Maturase K</fullName>
    </recommendedName>
    <alternativeName>
        <fullName evidence="1">Intron maturase</fullName>
    </alternativeName>
</protein>
<accession>Q8MCM4</accession>
<proteinExistence type="inferred from homology"/>
<comment type="function">
    <text evidence="1">Usually encoded in the trnK tRNA gene intron. Probably assists in splicing its own and other chloroplast group II introns.</text>
</comment>
<comment type="subcellular location">
    <subcellularLocation>
        <location>Plastid</location>
        <location>Chloroplast</location>
    </subcellularLocation>
</comment>
<comment type="similarity">
    <text evidence="1">Belongs to the intron maturase 2 family. MatK subfamily.</text>
</comment>
<keyword id="KW-0150">Chloroplast</keyword>
<keyword id="KW-0507">mRNA processing</keyword>
<keyword id="KW-0934">Plastid</keyword>
<keyword id="KW-0694">RNA-binding</keyword>
<keyword id="KW-0819">tRNA processing</keyword>
<dbReference type="EMBL" id="AF522131">
    <property type="protein sequence ID" value="AAM82123.1"/>
    <property type="molecule type" value="Genomic_DNA"/>
</dbReference>
<dbReference type="RefSeq" id="YP_009027167.1">
    <property type="nucleotide sequence ID" value="NC_024036.1"/>
</dbReference>
<dbReference type="GeneID" id="19099427"/>
<dbReference type="GO" id="GO:0009507">
    <property type="term" value="C:chloroplast"/>
    <property type="evidence" value="ECO:0007669"/>
    <property type="project" value="UniProtKB-SubCell"/>
</dbReference>
<dbReference type="GO" id="GO:0003723">
    <property type="term" value="F:RNA binding"/>
    <property type="evidence" value="ECO:0007669"/>
    <property type="project" value="UniProtKB-KW"/>
</dbReference>
<dbReference type="GO" id="GO:0006397">
    <property type="term" value="P:mRNA processing"/>
    <property type="evidence" value="ECO:0007669"/>
    <property type="project" value="UniProtKB-KW"/>
</dbReference>
<dbReference type="GO" id="GO:0008380">
    <property type="term" value="P:RNA splicing"/>
    <property type="evidence" value="ECO:0007669"/>
    <property type="project" value="UniProtKB-UniRule"/>
</dbReference>
<dbReference type="GO" id="GO:0008033">
    <property type="term" value="P:tRNA processing"/>
    <property type="evidence" value="ECO:0007669"/>
    <property type="project" value="UniProtKB-KW"/>
</dbReference>
<dbReference type="HAMAP" id="MF_01390">
    <property type="entry name" value="MatK"/>
    <property type="match status" value="1"/>
</dbReference>
<dbReference type="InterPro" id="IPR024937">
    <property type="entry name" value="Domain_X"/>
</dbReference>
<dbReference type="InterPro" id="IPR002866">
    <property type="entry name" value="Maturase_MatK"/>
</dbReference>
<dbReference type="InterPro" id="IPR024942">
    <property type="entry name" value="Maturase_MatK_N"/>
</dbReference>
<dbReference type="PANTHER" id="PTHR34811">
    <property type="entry name" value="MATURASE K"/>
    <property type="match status" value="1"/>
</dbReference>
<dbReference type="PANTHER" id="PTHR34811:SF1">
    <property type="entry name" value="MATURASE K"/>
    <property type="match status" value="1"/>
</dbReference>
<dbReference type="Pfam" id="PF01348">
    <property type="entry name" value="Intron_maturas2"/>
    <property type="match status" value="1"/>
</dbReference>
<dbReference type="Pfam" id="PF01824">
    <property type="entry name" value="MatK_N"/>
    <property type="match status" value="1"/>
</dbReference>
<sequence>MKEYRVYLERARSRQQDFLYPLIFREYIYGLAYSHNFNRSIFMENGGYDNKYSLLNVKRLITRMYQQNHLIISANDSNKNPFLGYNKNFYSQIISEGFAIIVEIPFFLQLSSSLEEAEIIKSYKNVRSIHSIFPFLEDKFTYLNYVSDIRIPYPIHLEILIQILRYWVKDVPFFHLLRLFLSHFCNWNCFIPTKKSISTFSKRNPRLFLFLHNFYVCEYESIFLFLRNKSSHLRLKSFSVFFERIFFYAKRKHLVEVFSKDFSYTLPFFKDPNIHYVRYQGKCILASKNVPFLMNKWKYYFIHLWQCFFDVWSQPRTININQLSEHSFQLLGYFSNVRLNRSVVRSQMLQNTFLIEIVSKKLDIIVPIIPLIRSLAKAKFCNVLGHPISKPVWADSSDFDIIERFLRICRNLSHYYNGSSKKKSLYRIKYILRLSCIKTLACKHKSTVRAFLKRSGSEELLEEFFTEEEEILSLIFPRDSFSLRRFHRNRIWYLDILFSNDLVNDE</sequence>
<gene>
    <name evidence="1" type="primary">matK</name>
</gene>
<evidence type="ECO:0000255" key="1">
    <source>
        <dbReference type="HAMAP-Rule" id="MF_01390"/>
    </source>
</evidence>
<geneLocation type="chloroplast"/>